<organism>
    <name type="scientific">Homo sapiens</name>
    <name type="common">Human</name>
    <dbReference type="NCBI Taxonomy" id="9606"/>
    <lineage>
        <taxon>Eukaryota</taxon>
        <taxon>Metazoa</taxon>
        <taxon>Chordata</taxon>
        <taxon>Craniata</taxon>
        <taxon>Vertebrata</taxon>
        <taxon>Euteleostomi</taxon>
        <taxon>Mammalia</taxon>
        <taxon>Eutheria</taxon>
        <taxon>Euarchontoglires</taxon>
        <taxon>Primates</taxon>
        <taxon>Haplorrhini</taxon>
        <taxon>Catarrhini</taxon>
        <taxon>Hominidae</taxon>
        <taxon>Homo</taxon>
    </lineage>
</organism>
<sequence length="114" mass="13035">MGTRLFFYVALCLLWTGHMDAGITQSPRHKVTETGTPVTLRCHQTENHRYMYWYRQDPGHGLRLIHYSYGVKDTDKGEVSDGYSVSRSKTEDFLLTLESATSSQTSVYFCAISE</sequence>
<protein>
    <recommendedName>
        <fullName evidence="8">T cell receptor beta variable 10-3</fullName>
    </recommendedName>
</protein>
<name>TVBJ3_HUMAN</name>
<comment type="function">
    <text evidence="3 5 6 7">V region of the variable domain of T cell receptor (TR) beta chain that participates in the antigen recognition (PubMed:24600447). Alpha-beta T cell receptors are antigen specific receptors which are essential to the immune response and are present on the cell surface of T lymphocytes. Recognize peptide-major histocompatibility (MH) (pMH) complexes that are displayed by antigen presenting cells (APC), a prerequisite for efficient T cell adaptive immunity against pathogens (PubMed:25493333). Binding of alpha-beta TR to pMH complex initiates TR-CD3 clustering on the cell surface and intracellular activation of LCK that phosphorylates the ITAM motifs of CD3G, CD3D, CD3E and CD247 enabling the recruitment of ZAP70. In turn ZAP70 phosphorylates LAT, which recruits numerous signaling molecules to form the LAT signalosome. The LAT signalosome propagates signal branching to three major signaling pathways, the calcium, the mitogen-activated protein kinase (MAPK) kinase and the nuclear factor NF-kappa-B (NF-kB) pathways, leading to the mobilization of transcription factors that are critical for gene expression and essential for T cell growth and differentiation (PubMed:23524462). The T cell repertoire is generated in the thymus, by V-(D)-J rearrangement. This repertoire is then shaped by intrathymic selection events to generate a peripheral T cell pool of self-MH restricted, non-autoaggressive T cells. Post-thymic interaction of alpha-beta TR with the pMH complexes shapes TR structural and functional avidity (PubMed:15040585).</text>
</comment>
<comment type="subunit">
    <text evidence="4">Alpha-beta TR is a heterodimer composed of an alpha and beta chain; disulfide-linked. The alpha-beta TR is associated with the transmembrane signaling CD3 coreceptor proteins to form the TR-CD3 (TcR or TCR). The assembly of alpha-beta TR heterodimers with CD3 occurs in the endoplasmic reticulum where a single alpha-beta TR heterodimer associates with one CD3D-CD3E heterodimer, one CD3G-CD3E heterodimer and one CD247 homodimer forming a stable octameric structure. CD3D-CD3E and CD3G-CD3E heterodimers preferentially associate with TR alpha and TR beta chains, respectively. The association of the CD247 homodimer is the last step of TcR assembly in the endoplasmic reticulum and is required for transport to the cell surface.</text>
</comment>
<comment type="subcellular location">
    <subcellularLocation>
        <location evidence="4">Cell membrane</location>
    </subcellularLocation>
</comment>
<comment type="polymorphism">
    <text evidence="9">There are several alleles. The sequence shown is that of IMGT allele TRBV10-3*01.</text>
</comment>
<dbReference type="EMBL" id="AC244196">
    <property type="status" value="NOT_ANNOTATED_CDS"/>
    <property type="molecule type" value="Genomic_DNA"/>
</dbReference>
<dbReference type="SMR" id="A0A0K0K1G6"/>
<dbReference type="FunCoup" id="A0A0K0K1G6">
    <property type="interactions" value="419"/>
</dbReference>
<dbReference type="IMGT_GENE-DB" id="TRBV10-3"/>
<dbReference type="BioMuta" id="TRBV10-3"/>
<dbReference type="Ensembl" id="ENST00000611462.1">
    <property type="protein sequence ID" value="ENSP00000479267.1"/>
    <property type="gene ID" value="ENSG00000275791.1"/>
</dbReference>
<dbReference type="Ensembl" id="ENST00000631471.1">
    <property type="protein sequence ID" value="ENSP00000487891.1"/>
    <property type="gene ID" value="ENSG00000282340.1"/>
</dbReference>
<dbReference type="UCSC" id="uc064iso.1">
    <property type="organism name" value="human"/>
</dbReference>
<dbReference type="AGR" id="HGNC:12179"/>
<dbReference type="GeneCards" id="TRBV10-3"/>
<dbReference type="HGNC" id="HGNC:12179">
    <property type="gene designation" value="TRBV10-3"/>
</dbReference>
<dbReference type="HPA" id="ENSG00000275791">
    <property type="expression patterns" value="Tissue enriched (lymphoid)"/>
</dbReference>
<dbReference type="neXtProt" id="NX_A0A0K0K1G6"/>
<dbReference type="OpenTargets" id="ENSG00000275791"/>
<dbReference type="VEuPathDB" id="HostDB:ENSG00000275791"/>
<dbReference type="GeneTree" id="ENSGT00940000154542"/>
<dbReference type="InParanoid" id="A0A0K0K1G6"/>
<dbReference type="OMA" id="TENHRYM"/>
<dbReference type="OrthoDB" id="9803478at2759"/>
<dbReference type="PAN-GO" id="A0A0K0K1G6">
    <property type="GO annotations" value="2 GO annotations based on evolutionary models"/>
</dbReference>
<dbReference type="ChiTaRS" id="TRBV10-3">
    <property type="organism name" value="human"/>
</dbReference>
<dbReference type="Pharos" id="A0A0K0K1G6">
    <property type="development level" value="Tdark"/>
</dbReference>
<dbReference type="PRO" id="PR:A0A0K0K1G6"/>
<dbReference type="Proteomes" id="UP000005640">
    <property type="component" value="Chromosome 7"/>
</dbReference>
<dbReference type="RNAct" id="A0A0K0K1G6">
    <property type="molecule type" value="protein"/>
</dbReference>
<dbReference type="Bgee" id="ENSG00000275791">
    <property type="expression patterns" value="Expressed in lymph node and 79 other cell types or tissues"/>
</dbReference>
<dbReference type="GO" id="GO:0005886">
    <property type="term" value="C:plasma membrane"/>
    <property type="evidence" value="ECO:0000318"/>
    <property type="project" value="GO_Central"/>
</dbReference>
<dbReference type="GO" id="GO:0042101">
    <property type="term" value="C:T cell receptor complex"/>
    <property type="evidence" value="ECO:0007669"/>
    <property type="project" value="UniProtKB-KW"/>
</dbReference>
<dbReference type="GO" id="GO:0002250">
    <property type="term" value="P:adaptive immune response"/>
    <property type="evidence" value="ECO:0007669"/>
    <property type="project" value="UniProtKB-KW"/>
</dbReference>
<dbReference type="GO" id="GO:0007166">
    <property type="term" value="P:cell surface receptor signaling pathway"/>
    <property type="evidence" value="ECO:0000318"/>
    <property type="project" value="GO_Central"/>
</dbReference>
<dbReference type="Gene3D" id="2.60.40.10">
    <property type="entry name" value="Immunoglobulins"/>
    <property type="match status" value="1"/>
</dbReference>
<dbReference type="InterPro" id="IPR007110">
    <property type="entry name" value="Ig-like_dom"/>
</dbReference>
<dbReference type="InterPro" id="IPR036179">
    <property type="entry name" value="Ig-like_dom_sf"/>
</dbReference>
<dbReference type="InterPro" id="IPR013783">
    <property type="entry name" value="Ig-like_fold"/>
</dbReference>
<dbReference type="InterPro" id="IPR013106">
    <property type="entry name" value="Ig_V-set"/>
</dbReference>
<dbReference type="InterPro" id="IPR050413">
    <property type="entry name" value="TCR_beta_variable"/>
</dbReference>
<dbReference type="PANTHER" id="PTHR23268:SF115">
    <property type="entry name" value="T CELL RECEPTOR BETA VARIABLE 10-3"/>
    <property type="match status" value="1"/>
</dbReference>
<dbReference type="PANTHER" id="PTHR23268">
    <property type="entry name" value="T-CELL RECEPTOR BETA CHAIN"/>
    <property type="match status" value="1"/>
</dbReference>
<dbReference type="Pfam" id="PF07686">
    <property type="entry name" value="V-set"/>
    <property type="match status" value="1"/>
</dbReference>
<dbReference type="SMART" id="SM00406">
    <property type="entry name" value="IGv"/>
    <property type="match status" value="1"/>
</dbReference>
<dbReference type="SUPFAM" id="SSF48726">
    <property type="entry name" value="Immunoglobulin"/>
    <property type="match status" value="1"/>
</dbReference>
<dbReference type="PROSITE" id="PS50835">
    <property type="entry name" value="IG_LIKE"/>
    <property type="match status" value="1"/>
</dbReference>
<feature type="signal peptide" evidence="1">
    <location>
        <begin position="1"/>
        <end position="21"/>
    </location>
</feature>
<feature type="chain" id="PRO_5014028883" description="T cell receptor beta variable 10-3" evidence="1">
    <location>
        <begin position="22"/>
        <end position="114"/>
    </location>
</feature>
<feature type="domain" description="Ig-like" evidence="2">
    <location>
        <begin position="22"/>
        <end position="114" status="greater than"/>
    </location>
</feature>
<feature type="disulfide bond" evidence="2">
    <location>
        <begin position="42"/>
        <end position="110"/>
    </location>
</feature>
<feature type="non-terminal residue">
    <location>
        <position position="114"/>
    </location>
</feature>
<gene>
    <name evidence="8" type="primary">TRBV10-3</name>
</gene>
<keyword id="KW-1064">Adaptive immunity</keyword>
<keyword id="KW-1003">Cell membrane</keyword>
<keyword id="KW-1015">Disulfide bond</keyword>
<keyword id="KW-0391">Immunity</keyword>
<keyword id="KW-0393">Immunoglobulin domain</keyword>
<keyword id="KW-0472">Membrane</keyword>
<keyword id="KW-0675">Receptor</keyword>
<keyword id="KW-1185">Reference proteome</keyword>
<keyword id="KW-0732">Signal</keyword>
<keyword id="KW-1279">T cell receptor</keyword>
<proteinExistence type="inferred from homology"/>
<reference key="1">
    <citation type="journal article" date="2003" name="Nature">
        <title>The DNA sequence of human chromosome 7.</title>
        <authorList>
            <person name="Hillier L.W."/>
            <person name="Fulton R.S."/>
            <person name="Fulton L.A."/>
            <person name="Graves T.A."/>
            <person name="Pepin K.H."/>
            <person name="Wagner-McPherson C."/>
            <person name="Layman D."/>
            <person name="Maas J."/>
            <person name="Jaeger S."/>
            <person name="Walker R."/>
            <person name="Wylie K."/>
            <person name="Sekhon M."/>
            <person name="Becker M.C."/>
            <person name="O'Laughlin M.D."/>
            <person name="Schaller M.E."/>
            <person name="Fewell G.A."/>
            <person name="Delehaunty K.D."/>
            <person name="Miner T.L."/>
            <person name="Nash W.E."/>
            <person name="Cordes M."/>
            <person name="Du H."/>
            <person name="Sun H."/>
            <person name="Edwards J."/>
            <person name="Bradshaw-Cordum H."/>
            <person name="Ali J."/>
            <person name="Andrews S."/>
            <person name="Isak A."/>
            <person name="Vanbrunt A."/>
            <person name="Nguyen C."/>
            <person name="Du F."/>
            <person name="Lamar B."/>
            <person name="Courtney L."/>
            <person name="Kalicki J."/>
            <person name="Ozersky P."/>
            <person name="Bielicki L."/>
            <person name="Scott K."/>
            <person name="Holmes A."/>
            <person name="Harkins R."/>
            <person name="Harris A."/>
            <person name="Strong C.M."/>
            <person name="Hou S."/>
            <person name="Tomlinson C."/>
            <person name="Dauphin-Kohlberg S."/>
            <person name="Kozlowicz-Reilly A."/>
            <person name="Leonard S."/>
            <person name="Rohlfing T."/>
            <person name="Rock S.M."/>
            <person name="Tin-Wollam A.-M."/>
            <person name="Abbott A."/>
            <person name="Minx P."/>
            <person name="Maupin R."/>
            <person name="Strowmatt C."/>
            <person name="Latreille P."/>
            <person name="Miller N."/>
            <person name="Johnson D."/>
            <person name="Murray J."/>
            <person name="Woessner J.P."/>
            <person name="Wendl M.C."/>
            <person name="Yang S.-P."/>
            <person name="Schultz B.R."/>
            <person name="Wallis J.W."/>
            <person name="Spieth J."/>
            <person name="Bieri T.A."/>
            <person name="Nelson J.O."/>
            <person name="Berkowicz N."/>
            <person name="Wohldmann P.E."/>
            <person name="Cook L.L."/>
            <person name="Hickenbotham M.T."/>
            <person name="Eldred J."/>
            <person name="Williams D."/>
            <person name="Bedell J.A."/>
            <person name="Mardis E.R."/>
            <person name="Clifton S.W."/>
            <person name="Chissoe S.L."/>
            <person name="Marra M.A."/>
            <person name="Raymond C."/>
            <person name="Haugen E."/>
            <person name="Gillett W."/>
            <person name="Zhou Y."/>
            <person name="James R."/>
            <person name="Phelps K."/>
            <person name="Iadanoto S."/>
            <person name="Bubb K."/>
            <person name="Simms E."/>
            <person name="Levy R."/>
            <person name="Clendenning J."/>
            <person name="Kaul R."/>
            <person name="Kent W.J."/>
            <person name="Furey T.S."/>
            <person name="Baertsch R.A."/>
            <person name="Brent M.R."/>
            <person name="Keibler E."/>
            <person name="Flicek P."/>
            <person name="Bork P."/>
            <person name="Suyama M."/>
            <person name="Bailey J.A."/>
            <person name="Portnoy M.E."/>
            <person name="Torrents D."/>
            <person name="Chinwalla A.T."/>
            <person name="Gish W.R."/>
            <person name="Eddy S.R."/>
            <person name="McPherson J.D."/>
            <person name="Olson M.V."/>
            <person name="Eichler E.E."/>
            <person name="Green E.D."/>
            <person name="Waterston R.H."/>
            <person name="Wilson R.K."/>
        </authorList>
    </citation>
    <scope>NUCLEOTIDE SEQUENCE [LARGE SCALE GENOMIC DNA] (IMGT ALLELE TRBV10-3*01)</scope>
</reference>
<reference key="2">
    <citation type="book" date="2001" name="The T Cell Receptor FactsBook.">
        <title>The T Cell Receptor FactsBook.</title>
        <editorList>
            <person name="Lefranc M.P."/>
            <person name="Lefranc G."/>
        </editorList>
        <authorList>
            <person name="Lefranc M.P."/>
            <person name="Lefranc G."/>
        </authorList>
    </citation>
    <scope>NOMENCLATURE</scope>
</reference>
<reference key="3">
    <citation type="journal article" date="2004" name="Nat. Rev. Immunol.">
        <title>The many important facets of T-cell repertoire diversity.</title>
        <authorList>
            <person name="Nikolich-Zugich J."/>
            <person name="Slifka M.K."/>
            <person name="Messaoudi I."/>
        </authorList>
    </citation>
    <scope>REVIEW ON T CELL REPERTOIRE DIVERSITY</scope>
</reference>
<reference key="4">
    <citation type="journal article" date="2010" name="Cold Spring Harb. Perspect. Biol.">
        <title>Structural biology of the T-cell receptor: insights into receptor assembly, ligand recognition, and initiation of signaling.</title>
        <authorList>
            <person name="Wucherpfennig K.W."/>
            <person name="Gagnon E."/>
            <person name="Call M.J."/>
            <person name="Huseby E.S."/>
            <person name="Call M.E."/>
        </authorList>
    </citation>
    <scope>REVIEW ON T CELL RECEPTOR-CD3 COMPLEX ASSEMBLY</scope>
    <scope>SUBCELLULAR LOCATION</scope>
</reference>
<reference key="5">
    <citation type="journal article" date="2013" name="Nat. Rev. Immunol.">
        <title>T cell receptor signalling networks: branched, diversified and bounded.</title>
        <authorList>
            <person name="Brownlie R.J."/>
            <person name="Zamoyska R."/>
        </authorList>
    </citation>
    <scope>REVIEW ON T CELL RECEPTOR SIGNALING</scope>
</reference>
<reference key="6">
    <citation type="journal article" date="2014" name="Front. Immunol.">
        <title>Immunoglobulin and T Cell Receptor Genes: IMGT((R)) and the Birth and Rise of Immunoinformatics.</title>
        <authorList>
            <person name="Lefranc M.P."/>
        </authorList>
    </citation>
    <scope>NOMENCLATURE</scope>
</reference>
<reference key="7">
    <citation type="journal article" date="2015" name="Annu. Rev. Immunol.">
        <title>T cell antigen receptor recognition of antigen-presenting molecules.</title>
        <authorList>
            <person name="Rossjohn J."/>
            <person name="Gras S."/>
            <person name="Miles J.J."/>
            <person name="Turner S.J."/>
            <person name="Godfrey D.I."/>
            <person name="McCluskey J."/>
        </authorList>
    </citation>
    <scope>REVIEW ON FUNCTION</scope>
</reference>
<evidence type="ECO:0000255" key="1"/>
<evidence type="ECO:0000255" key="2">
    <source>
        <dbReference type="PROSITE-ProRule" id="PRU00114"/>
    </source>
</evidence>
<evidence type="ECO:0000303" key="3">
    <source>
    </source>
</evidence>
<evidence type="ECO:0000303" key="4">
    <source>
    </source>
</evidence>
<evidence type="ECO:0000303" key="5">
    <source>
    </source>
</evidence>
<evidence type="ECO:0000303" key="6">
    <source>
    </source>
</evidence>
<evidence type="ECO:0000303" key="7">
    <source>
    </source>
</evidence>
<evidence type="ECO:0000303" key="8">
    <source ref="2"/>
</evidence>
<evidence type="ECO:0000305" key="9"/>
<accession>A0A0K0K1G6</accession>
<accession>A0A087WV87</accession>
<accession>A0A5A5</accession>